<organism>
    <name type="scientific">Streptococcus mutans serotype c (strain ATCC 700610 / UA159)</name>
    <dbReference type="NCBI Taxonomy" id="210007"/>
    <lineage>
        <taxon>Bacteria</taxon>
        <taxon>Bacillati</taxon>
        <taxon>Bacillota</taxon>
        <taxon>Bacilli</taxon>
        <taxon>Lactobacillales</taxon>
        <taxon>Streptococcaceae</taxon>
        <taxon>Streptococcus</taxon>
    </lineage>
</organism>
<accession>Q8DRX8</accession>
<sequence length="139" mass="15546">MRIIGLDVGSKTVGVAVSDPLGFTAQGLEIIPINEAKGEFGFDRLADLVKDYKVEKFVVGLPKNMNNTSGPRVEASQAYGKKIKELFDLPVEYQDERLTTVQAERMLVEQADVSRGKRKKVIDKLAAQLILQNYLDRMF</sequence>
<comment type="function">
    <text evidence="1">Could be a nuclease involved in processing of the 5'-end of pre-16S rRNA.</text>
</comment>
<comment type="subcellular location">
    <subcellularLocation>
        <location evidence="1">Cytoplasm</location>
    </subcellularLocation>
</comment>
<comment type="similarity">
    <text evidence="1">Belongs to the YqgF nuclease family.</text>
</comment>
<dbReference type="EC" id="3.1.-.-" evidence="1"/>
<dbReference type="EMBL" id="AE014133">
    <property type="protein sequence ID" value="AAN59674.1"/>
    <property type="molecule type" value="Genomic_DNA"/>
</dbReference>
<dbReference type="RefSeq" id="NP_722368.1">
    <property type="nucleotide sequence ID" value="NC_004350.2"/>
</dbReference>
<dbReference type="SMR" id="Q8DRX8"/>
<dbReference type="STRING" id="210007.SMU_2078c"/>
<dbReference type="KEGG" id="smu:SMU_2078c"/>
<dbReference type="PATRIC" id="fig|210007.7.peg.1850"/>
<dbReference type="eggNOG" id="COG0816">
    <property type="taxonomic scope" value="Bacteria"/>
</dbReference>
<dbReference type="HOGENOM" id="CLU_098240_2_0_9"/>
<dbReference type="OrthoDB" id="9796140at2"/>
<dbReference type="PhylomeDB" id="Q8DRX8"/>
<dbReference type="Proteomes" id="UP000002512">
    <property type="component" value="Chromosome"/>
</dbReference>
<dbReference type="GO" id="GO:0005829">
    <property type="term" value="C:cytosol"/>
    <property type="evidence" value="ECO:0007669"/>
    <property type="project" value="TreeGrafter"/>
</dbReference>
<dbReference type="GO" id="GO:0004518">
    <property type="term" value="F:nuclease activity"/>
    <property type="evidence" value="ECO:0007669"/>
    <property type="project" value="UniProtKB-KW"/>
</dbReference>
<dbReference type="GO" id="GO:0000967">
    <property type="term" value="P:rRNA 5'-end processing"/>
    <property type="evidence" value="ECO:0007669"/>
    <property type="project" value="UniProtKB-UniRule"/>
</dbReference>
<dbReference type="CDD" id="cd16964">
    <property type="entry name" value="YqgF"/>
    <property type="match status" value="1"/>
</dbReference>
<dbReference type="FunFam" id="3.30.420.140:FF:000003">
    <property type="entry name" value="Putative pre-16S rRNA nuclease"/>
    <property type="match status" value="1"/>
</dbReference>
<dbReference type="Gene3D" id="3.30.420.140">
    <property type="entry name" value="YqgF/RNase H-like domain"/>
    <property type="match status" value="1"/>
</dbReference>
<dbReference type="HAMAP" id="MF_00651">
    <property type="entry name" value="Nuclease_YqgF"/>
    <property type="match status" value="1"/>
</dbReference>
<dbReference type="InterPro" id="IPR012337">
    <property type="entry name" value="RNaseH-like_sf"/>
</dbReference>
<dbReference type="InterPro" id="IPR005227">
    <property type="entry name" value="YqgF"/>
</dbReference>
<dbReference type="InterPro" id="IPR006641">
    <property type="entry name" value="YqgF/RNaseH-like_dom"/>
</dbReference>
<dbReference type="InterPro" id="IPR037027">
    <property type="entry name" value="YqgF/RNaseH-like_dom_sf"/>
</dbReference>
<dbReference type="NCBIfam" id="TIGR00250">
    <property type="entry name" value="RNAse_H_YqgF"/>
    <property type="match status" value="1"/>
</dbReference>
<dbReference type="PANTHER" id="PTHR33317">
    <property type="entry name" value="POLYNUCLEOTIDYL TRANSFERASE, RIBONUCLEASE H-LIKE SUPERFAMILY PROTEIN"/>
    <property type="match status" value="1"/>
</dbReference>
<dbReference type="PANTHER" id="PTHR33317:SF4">
    <property type="entry name" value="POLYNUCLEOTIDYL TRANSFERASE, RIBONUCLEASE H-LIKE SUPERFAMILY PROTEIN"/>
    <property type="match status" value="1"/>
</dbReference>
<dbReference type="Pfam" id="PF03652">
    <property type="entry name" value="RuvX"/>
    <property type="match status" value="1"/>
</dbReference>
<dbReference type="SMART" id="SM00732">
    <property type="entry name" value="YqgFc"/>
    <property type="match status" value="1"/>
</dbReference>
<dbReference type="SUPFAM" id="SSF53098">
    <property type="entry name" value="Ribonuclease H-like"/>
    <property type="match status" value="1"/>
</dbReference>
<name>YQGF_STRMU</name>
<proteinExistence type="inferred from homology"/>
<reference key="1">
    <citation type="journal article" date="2002" name="Proc. Natl. Acad. Sci. U.S.A.">
        <title>Genome sequence of Streptococcus mutans UA159, a cariogenic dental pathogen.</title>
        <authorList>
            <person name="Ajdic D.J."/>
            <person name="McShan W.M."/>
            <person name="McLaughlin R.E."/>
            <person name="Savic G."/>
            <person name="Chang J."/>
            <person name="Carson M.B."/>
            <person name="Primeaux C."/>
            <person name="Tian R."/>
            <person name="Kenton S."/>
            <person name="Jia H.G."/>
            <person name="Lin S.P."/>
            <person name="Qian Y."/>
            <person name="Li S."/>
            <person name="Zhu H."/>
            <person name="Najar F.Z."/>
            <person name="Lai H."/>
            <person name="White J."/>
            <person name="Roe B.A."/>
            <person name="Ferretti J.J."/>
        </authorList>
    </citation>
    <scope>NUCLEOTIDE SEQUENCE [LARGE SCALE GENOMIC DNA]</scope>
    <source>
        <strain>ATCC 700610 / UA159</strain>
    </source>
</reference>
<evidence type="ECO:0000255" key="1">
    <source>
        <dbReference type="HAMAP-Rule" id="MF_00651"/>
    </source>
</evidence>
<keyword id="KW-0963">Cytoplasm</keyword>
<keyword id="KW-0378">Hydrolase</keyword>
<keyword id="KW-0540">Nuclease</keyword>
<keyword id="KW-1185">Reference proteome</keyword>
<keyword id="KW-0690">Ribosome biogenesis</keyword>
<gene>
    <name type="ordered locus">SMU_2078c</name>
</gene>
<protein>
    <recommendedName>
        <fullName evidence="1">Putative pre-16S rRNA nuclease</fullName>
        <ecNumber evidence="1">3.1.-.-</ecNumber>
    </recommendedName>
</protein>
<feature type="chain" id="PRO_0000172149" description="Putative pre-16S rRNA nuclease">
    <location>
        <begin position="1"/>
        <end position="139"/>
    </location>
</feature>